<accession>C0MHB4</accession>
<comment type="subunit">
    <text evidence="1">Part of the 50S ribosomal subunit.</text>
</comment>
<comment type="similarity">
    <text evidence="1">Belongs to the bacterial ribosomal protein bL31 family. Type B subfamily.</text>
</comment>
<proteinExistence type="inferred from homology"/>
<name>RL31B_STRS7</name>
<reference key="1">
    <citation type="journal article" date="2009" name="PLoS Pathog.">
        <title>Genomic evidence for the evolution of Streptococcus equi: host restriction, increased virulence, and genetic exchange with human pathogens.</title>
        <authorList>
            <person name="Holden M.T.G."/>
            <person name="Heather Z."/>
            <person name="Paillot R."/>
            <person name="Steward K.F."/>
            <person name="Webb K."/>
            <person name="Ainslie F."/>
            <person name="Jourdan T."/>
            <person name="Bason N.C."/>
            <person name="Holroyd N.E."/>
            <person name="Mungall K."/>
            <person name="Quail M.A."/>
            <person name="Sanders M."/>
            <person name="Simmonds M."/>
            <person name="Willey D."/>
            <person name="Brooks K."/>
            <person name="Aanensen D.M."/>
            <person name="Spratt B.G."/>
            <person name="Jolley K.A."/>
            <person name="Maiden M.C.J."/>
            <person name="Kehoe M."/>
            <person name="Chanter N."/>
            <person name="Bentley S.D."/>
            <person name="Robinson C."/>
            <person name="Maskell D.J."/>
            <person name="Parkhill J."/>
            <person name="Waller A.S."/>
        </authorList>
    </citation>
    <scope>NUCLEOTIDE SEQUENCE [LARGE SCALE GENOMIC DNA]</scope>
    <source>
        <strain>H70</strain>
    </source>
</reference>
<keyword id="KW-0687">Ribonucleoprotein</keyword>
<keyword id="KW-0689">Ribosomal protein</keyword>
<feature type="chain" id="PRO_1000206537" description="Large ribosomal subunit protein bL31B">
    <location>
        <begin position="1"/>
        <end position="86"/>
    </location>
</feature>
<evidence type="ECO:0000255" key="1">
    <source>
        <dbReference type="HAMAP-Rule" id="MF_00502"/>
    </source>
</evidence>
<evidence type="ECO:0000305" key="2"/>
<sequence length="86" mass="9854">MRKDIHPDYRPVVFLDTTTGYKFLSGSTKASKETIEFEGETYPLVRVEISSDSHPFYTGRQKFTQADGRVDRFNKKYGLKDANAAK</sequence>
<organism>
    <name type="scientific">Streptococcus equi subsp. zooepidemicus (strain H70)</name>
    <dbReference type="NCBI Taxonomy" id="553483"/>
    <lineage>
        <taxon>Bacteria</taxon>
        <taxon>Bacillati</taxon>
        <taxon>Bacillota</taxon>
        <taxon>Bacilli</taxon>
        <taxon>Lactobacillales</taxon>
        <taxon>Streptococcaceae</taxon>
        <taxon>Streptococcus</taxon>
    </lineage>
</organism>
<dbReference type="EMBL" id="FM204884">
    <property type="protein sequence ID" value="CAW99679.1"/>
    <property type="molecule type" value="Genomic_DNA"/>
</dbReference>
<dbReference type="SMR" id="C0MHB4"/>
<dbReference type="KEGG" id="seq:SZO_12080"/>
<dbReference type="eggNOG" id="COG0254">
    <property type="taxonomic scope" value="Bacteria"/>
</dbReference>
<dbReference type="HOGENOM" id="CLU_114306_2_1_9"/>
<dbReference type="Proteomes" id="UP000001368">
    <property type="component" value="Chromosome"/>
</dbReference>
<dbReference type="GO" id="GO:1990904">
    <property type="term" value="C:ribonucleoprotein complex"/>
    <property type="evidence" value="ECO:0007669"/>
    <property type="project" value="UniProtKB-KW"/>
</dbReference>
<dbReference type="GO" id="GO:0005840">
    <property type="term" value="C:ribosome"/>
    <property type="evidence" value="ECO:0007669"/>
    <property type="project" value="UniProtKB-KW"/>
</dbReference>
<dbReference type="GO" id="GO:0003735">
    <property type="term" value="F:structural constituent of ribosome"/>
    <property type="evidence" value="ECO:0007669"/>
    <property type="project" value="InterPro"/>
</dbReference>
<dbReference type="GO" id="GO:0006412">
    <property type="term" value="P:translation"/>
    <property type="evidence" value="ECO:0007669"/>
    <property type="project" value="UniProtKB-UniRule"/>
</dbReference>
<dbReference type="Gene3D" id="4.10.830.30">
    <property type="entry name" value="Ribosomal protein L31"/>
    <property type="match status" value="1"/>
</dbReference>
<dbReference type="HAMAP" id="MF_00502">
    <property type="entry name" value="Ribosomal_bL31_2"/>
    <property type="match status" value="1"/>
</dbReference>
<dbReference type="InterPro" id="IPR034704">
    <property type="entry name" value="Ribosomal_bL28/bL31-like_sf"/>
</dbReference>
<dbReference type="InterPro" id="IPR002150">
    <property type="entry name" value="Ribosomal_bL31"/>
</dbReference>
<dbReference type="InterPro" id="IPR027493">
    <property type="entry name" value="Ribosomal_bL31_B"/>
</dbReference>
<dbReference type="InterPro" id="IPR042105">
    <property type="entry name" value="Ribosomal_bL31_sf"/>
</dbReference>
<dbReference type="NCBIfam" id="TIGR00105">
    <property type="entry name" value="L31"/>
    <property type="match status" value="1"/>
</dbReference>
<dbReference type="NCBIfam" id="NF002462">
    <property type="entry name" value="PRK01678.1"/>
    <property type="match status" value="1"/>
</dbReference>
<dbReference type="PANTHER" id="PTHR33280">
    <property type="entry name" value="50S RIBOSOMAL PROTEIN L31, CHLOROPLASTIC"/>
    <property type="match status" value="1"/>
</dbReference>
<dbReference type="PANTHER" id="PTHR33280:SF1">
    <property type="entry name" value="LARGE RIBOSOMAL SUBUNIT PROTEIN BL31C"/>
    <property type="match status" value="1"/>
</dbReference>
<dbReference type="Pfam" id="PF01197">
    <property type="entry name" value="Ribosomal_L31"/>
    <property type="match status" value="1"/>
</dbReference>
<dbReference type="PRINTS" id="PR01249">
    <property type="entry name" value="RIBOSOMALL31"/>
</dbReference>
<dbReference type="SUPFAM" id="SSF143800">
    <property type="entry name" value="L28p-like"/>
    <property type="match status" value="1"/>
</dbReference>
<dbReference type="PROSITE" id="PS01143">
    <property type="entry name" value="RIBOSOMAL_L31"/>
    <property type="match status" value="1"/>
</dbReference>
<protein>
    <recommendedName>
        <fullName evidence="1">Large ribosomal subunit protein bL31B</fullName>
    </recommendedName>
    <alternativeName>
        <fullName evidence="2">50S ribosomal protein L31 type B</fullName>
    </alternativeName>
</protein>
<gene>
    <name evidence="1" type="primary">rpmE2</name>
    <name type="ordered locus">SZO_12080</name>
</gene>